<dbReference type="EMBL" id="AL445067">
    <property type="protein sequence ID" value="CAC12395.1"/>
    <property type="molecule type" value="Genomic_DNA"/>
</dbReference>
<dbReference type="RefSeq" id="WP_010901679.1">
    <property type="nucleotide sequence ID" value="NC_002578.1"/>
</dbReference>
<dbReference type="SMR" id="Q9HIQ9"/>
<dbReference type="FunCoup" id="Q9HIQ9">
    <property type="interactions" value="112"/>
</dbReference>
<dbReference type="STRING" id="273075.gene:9572494"/>
<dbReference type="PaxDb" id="273075-Ta1271"/>
<dbReference type="EnsemblBacteria" id="CAC12395">
    <property type="protein sequence ID" value="CAC12395"/>
    <property type="gene ID" value="CAC12395"/>
</dbReference>
<dbReference type="KEGG" id="tac:Ta1271"/>
<dbReference type="eggNOG" id="arCOG04070">
    <property type="taxonomic scope" value="Archaea"/>
</dbReference>
<dbReference type="HOGENOM" id="CLU_033361_2_0_2"/>
<dbReference type="InParanoid" id="Q9HIQ9"/>
<dbReference type="OrthoDB" id="6121at2157"/>
<dbReference type="Proteomes" id="UP000001024">
    <property type="component" value="Chromosome"/>
</dbReference>
<dbReference type="GO" id="GO:0022625">
    <property type="term" value="C:cytosolic large ribosomal subunit"/>
    <property type="evidence" value="ECO:0007669"/>
    <property type="project" value="TreeGrafter"/>
</dbReference>
<dbReference type="GO" id="GO:0019843">
    <property type="term" value="F:rRNA binding"/>
    <property type="evidence" value="ECO:0007669"/>
    <property type="project" value="UniProtKB-UniRule"/>
</dbReference>
<dbReference type="GO" id="GO:0003735">
    <property type="term" value="F:structural constituent of ribosome"/>
    <property type="evidence" value="ECO:0007669"/>
    <property type="project" value="InterPro"/>
</dbReference>
<dbReference type="GO" id="GO:0006412">
    <property type="term" value="P:translation"/>
    <property type="evidence" value="ECO:0007669"/>
    <property type="project" value="UniProtKB-UniRule"/>
</dbReference>
<dbReference type="Gene3D" id="3.30.1430.10">
    <property type="match status" value="1"/>
</dbReference>
<dbReference type="Gene3D" id="4.10.960.10">
    <property type="entry name" value="Ribosomal protein L3, domain 3"/>
    <property type="match status" value="1"/>
</dbReference>
<dbReference type="Gene3D" id="2.40.30.10">
    <property type="entry name" value="Translation factors"/>
    <property type="match status" value="1"/>
</dbReference>
<dbReference type="HAMAP" id="MF_01325_A">
    <property type="entry name" value="Ribosomal_uL3_A"/>
    <property type="match status" value="1"/>
</dbReference>
<dbReference type="InterPro" id="IPR045077">
    <property type="entry name" value="L3_arc_euk"/>
</dbReference>
<dbReference type="InterPro" id="IPR044892">
    <property type="entry name" value="Ribosomal_L3_dom_3_arc_sf"/>
</dbReference>
<dbReference type="InterPro" id="IPR000597">
    <property type="entry name" value="Ribosomal_uL3"/>
</dbReference>
<dbReference type="InterPro" id="IPR019928">
    <property type="entry name" value="Ribosomal_uL3_arc"/>
</dbReference>
<dbReference type="InterPro" id="IPR009000">
    <property type="entry name" value="Transl_B-barrel_sf"/>
</dbReference>
<dbReference type="NCBIfam" id="TIGR03626">
    <property type="entry name" value="L3_arch"/>
    <property type="match status" value="1"/>
</dbReference>
<dbReference type="NCBIfam" id="NF003261">
    <property type="entry name" value="PRK04231.1"/>
    <property type="match status" value="1"/>
</dbReference>
<dbReference type="PANTHER" id="PTHR11363">
    <property type="entry name" value="60S RIBOSOMAL PROTEIN L3-RELATED"/>
    <property type="match status" value="1"/>
</dbReference>
<dbReference type="PANTHER" id="PTHR11363:SF5">
    <property type="entry name" value="LARGE RIBOSOMAL SUBUNIT PROTEIN UL3"/>
    <property type="match status" value="1"/>
</dbReference>
<dbReference type="Pfam" id="PF00297">
    <property type="entry name" value="Ribosomal_L3"/>
    <property type="match status" value="2"/>
</dbReference>
<dbReference type="SUPFAM" id="SSF50447">
    <property type="entry name" value="Translation proteins"/>
    <property type="match status" value="1"/>
</dbReference>
<accession>Q9HIQ9</accession>
<evidence type="ECO:0000255" key="1">
    <source>
        <dbReference type="HAMAP-Rule" id="MF_01325"/>
    </source>
</evidence>
<evidence type="ECO:0000305" key="2"/>
<comment type="function">
    <text evidence="1">One of the primary rRNA binding proteins, it binds directly near the 3'-end of the 23S rRNA, where it nucleates assembly of the 50S subunit.</text>
</comment>
<comment type="subunit">
    <text evidence="1">Part of the 50S ribosomal subunit. Forms a cluster with proteins L14 and L24e.</text>
</comment>
<comment type="similarity">
    <text evidence="1">Belongs to the universal ribosomal protein uL3 family.</text>
</comment>
<proteinExistence type="inferred from homology"/>
<sequence length="331" mass="37577">MATPHHSRRGSMAYYPRVRAKSVDPKIRSWPEIKGEVKVQGFAGFKVGMTHVEMIDYRKKSVTAGQPILVPVTVVEVPPLDVVGYRLYDEDAEGNLVVVFEAWAKDLDKEIFRKIPEIKKVAERDPPESYEDVRIIVATRNKDVPGIPSKKPEIFELRIGGGNSVKERLEYAKNHLGKQITFTDFSKPGKFVDVVSITKGKGFTGHVKRFGVKLLPRKNRKHRRMIGTLGPWHPDWVRNTVPQAGQMGFQQRTISNVRVIKYGNKEEVDSINVRGGFLHYGFVKNDYVLLFGSIPGASKRLIKMRDPARQKVPDIEEVKLEYISLESKQGD</sequence>
<reference key="1">
    <citation type="journal article" date="2000" name="Nature">
        <title>The genome sequence of the thermoacidophilic scavenger Thermoplasma acidophilum.</title>
        <authorList>
            <person name="Ruepp A."/>
            <person name="Graml W."/>
            <person name="Santos-Martinez M.-L."/>
            <person name="Koretke K.K."/>
            <person name="Volker C."/>
            <person name="Mewes H.-W."/>
            <person name="Frishman D."/>
            <person name="Stocker S."/>
            <person name="Lupas A.N."/>
            <person name="Baumeister W."/>
        </authorList>
    </citation>
    <scope>NUCLEOTIDE SEQUENCE [LARGE SCALE GENOMIC DNA]</scope>
    <source>
        <strain>ATCC 25905 / DSM 1728 / JCM 9062 / NBRC 15155 / AMRC-C165</strain>
    </source>
</reference>
<protein>
    <recommendedName>
        <fullName evidence="1">Large ribosomal subunit protein uL3</fullName>
    </recommendedName>
    <alternativeName>
        <fullName evidence="2">50S ribosomal protein L3</fullName>
    </alternativeName>
</protein>
<gene>
    <name evidence="1" type="primary">rpl3</name>
    <name type="ordered locus">Ta1271</name>
</gene>
<organism>
    <name type="scientific">Thermoplasma acidophilum (strain ATCC 25905 / DSM 1728 / JCM 9062 / NBRC 15155 / AMRC-C165)</name>
    <dbReference type="NCBI Taxonomy" id="273075"/>
    <lineage>
        <taxon>Archaea</taxon>
        <taxon>Methanobacteriati</taxon>
        <taxon>Thermoplasmatota</taxon>
        <taxon>Thermoplasmata</taxon>
        <taxon>Thermoplasmatales</taxon>
        <taxon>Thermoplasmataceae</taxon>
        <taxon>Thermoplasma</taxon>
    </lineage>
</organism>
<name>RL3_THEAC</name>
<keyword id="KW-1185">Reference proteome</keyword>
<keyword id="KW-0687">Ribonucleoprotein</keyword>
<keyword id="KW-0689">Ribosomal protein</keyword>
<keyword id="KW-0694">RNA-binding</keyword>
<keyword id="KW-0699">rRNA-binding</keyword>
<feature type="chain" id="PRO_0000077224" description="Large ribosomal subunit protein uL3">
    <location>
        <begin position="1"/>
        <end position="331"/>
    </location>
</feature>